<name>CP19A_ORYLA</name>
<proteinExistence type="evidence at transcript level"/>
<comment type="function">
    <text evidence="1">Catalyzes the formation of aromatic C18 estrogens from C19 androgens.</text>
</comment>
<comment type="catalytic activity">
    <reaction evidence="2">
        <text>testosterone + 3 reduced [NADPH--hemoprotein reductase] + 3 O2 = 17beta-estradiol + formate + 3 oxidized [NADPH--hemoprotein reductase] + 4 H2O + 4 H(+)</text>
        <dbReference type="Rhea" id="RHEA:38191"/>
        <dbReference type="Rhea" id="RHEA-COMP:11964"/>
        <dbReference type="Rhea" id="RHEA-COMP:11965"/>
        <dbReference type="ChEBI" id="CHEBI:15377"/>
        <dbReference type="ChEBI" id="CHEBI:15378"/>
        <dbReference type="ChEBI" id="CHEBI:15379"/>
        <dbReference type="ChEBI" id="CHEBI:15740"/>
        <dbReference type="ChEBI" id="CHEBI:16469"/>
        <dbReference type="ChEBI" id="CHEBI:17347"/>
        <dbReference type="ChEBI" id="CHEBI:57618"/>
        <dbReference type="ChEBI" id="CHEBI:58210"/>
        <dbReference type="EC" id="1.14.14.14"/>
    </reaction>
</comment>
<comment type="catalytic activity">
    <reaction evidence="2">
        <text>androst-4-ene-3,17-dione + 3 reduced [NADPH--hemoprotein reductase] + 3 O2 = estrone + formate + 3 oxidized [NADPH--hemoprotein reductase] + 4 H2O + 4 H(+)</text>
        <dbReference type="Rhea" id="RHEA:38195"/>
        <dbReference type="Rhea" id="RHEA-COMP:11964"/>
        <dbReference type="Rhea" id="RHEA-COMP:11965"/>
        <dbReference type="ChEBI" id="CHEBI:15377"/>
        <dbReference type="ChEBI" id="CHEBI:15378"/>
        <dbReference type="ChEBI" id="CHEBI:15379"/>
        <dbReference type="ChEBI" id="CHEBI:15740"/>
        <dbReference type="ChEBI" id="CHEBI:16422"/>
        <dbReference type="ChEBI" id="CHEBI:17263"/>
        <dbReference type="ChEBI" id="CHEBI:57618"/>
        <dbReference type="ChEBI" id="CHEBI:58210"/>
        <dbReference type="EC" id="1.14.14.14"/>
    </reaction>
</comment>
<comment type="cofactor">
    <cofactor evidence="1">
        <name>heme</name>
        <dbReference type="ChEBI" id="CHEBI:30413"/>
    </cofactor>
</comment>
<comment type="subcellular location">
    <subcellularLocation>
        <location>Membrane</location>
        <topology>Peripheral membrane protein</topology>
    </subcellularLocation>
</comment>
<comment type="similarity">
    <text evidence="3">Belongs to the cytochrome P450 family.</text>
</comment>
<organism>
    <name type="scientific">Oryzias latipes</name>
    <name type="common">Japanese rice fish</name>
    <name type="synonym">Japanese killifish</name>
    <dbReference type="NCBI Taxonomy" id="8090"/>
    <lineage>
        <taxon>Eukaryota</taxon>
        <taxon>Metazoa</taxon>
        <taxon>Chordata</taxon>
        <taxon>Craniata</taxon>
        <taxon>Vertebrata</taxon>
        <taxon>Euteleostomi</taxon>
        <taxon>Actinopterygii</taxon>
        <taxon>Neopterygii</taxon>
        <taxon>Teleostei</taxon>
        <taxon>Neoteleostei</taxon>
        <taxon>Acanthomorphata</taxon>
        <taxon>Ovalentaria</taxon>
        <taxon>Atherinomorphae</taxon>
        <taxon>Beloniformes</taxon>
        <taxon>Adrianichthyidae</taxon>
        <taxon>Oryziinae</taxon>
        <taxon>Oryzias</taxon>
    </lineage>
</organism>
<protein>
    <recommendedName>
        <fullName>Aromatase</fullName>
        <ecNumber evidence="2">1.14.14.14</ecNumber>
    </recommendedName>
    <alternativeName>
        <fullName>CYPXIX</fullName>
    </alternativeName>
    <alternativeName>
        <fullName>Cytochrome P-450AROM</fullName>
    </alternativeName>
    <alternativeName>
        <fullName>Cytochrome P450 19A1</fullName>
    </alternativeName>
    <alternativeName>
        <fullName>Estrogen synthase</fullName>
    </alternativeName>
</protein>
<feature type="chain" id="PRO_0000051972" description="Aromatase">
    <location>
        <begin position="1"/>
        <end position="518"/>
    </location>
</feature>
<feature type="binding site" description="axial binding residue" evidence="1">
    <location>
        <position position="446"/>
    </location>
    <ligand>
        <name>heme</name>
        <dbReference type="ChEBI" id="CHEBI:30413"/>
    </ligand>
    <ligandPart>
        <name>Fe</name>
        <dbReference type="ChEBI" id="CHEBI:18248"/>
    </ligandPart>
</feature>
<dbReference type="EC" id="1.14.14.14" evidence="2"/>
<dbReference type="EMBL" id="D82968">
    <property type="protein sequence ID" value="BAA11656.1"/>
    <property type="molecule type" value="mRNA"/>
</dbReference>
<dbReference type="EMBL" id="D82969">
    <property type="protein sequence ID" value="BAA11657.1"/>
    <property type="molecule type" value="Genomic_DNA"/>
</dbReference>
<dbReference type="EMBL" id="AB030454">
    <property type="protein sequence ID" value="BAA85121.1"/>
    <property type="molecule type" value="Genomic_DNA"/>
</dbReference>
<dbReference type="EMBL" id="AB030455">
    <property type="protein sequence ID" value="BAA85122.1"/>
    <property type="molecule type" value="Genomic_DNA"/>
</dbReference>
<dbReference type="RefSeq" id="NP_001265808.1">
    <property type="nucleotide sequence ID" value="NM_001278879.1"/>
</dbReference>
<dbReference type="SMR" id="Q92087"/>
<dbReference type="FunCoup" id="Q92087">
    <property type="interactions" value="35"/>
</dbReference>
<dbReference type="STRING" id="8090.ENSORLP00000003688"/>
<dbReference type="Ensembl" id="ENSORLT00000003689.2">
    <property type="protein sequence ID" value="ENSORLP00000003688.2"/>
    <property type="gene ID" value="ENSORLG00000002949.2"/>
</dbReference>
<dbReference type="Ensembl" id="ENSORLT00020029605.1">
    <property type="protein sequence ID" value="ENSORLP00020034671.1"/>
    <property type="gene ID" value="ENSORLG00020021280.1"/>
</dbReference>
<dbReference type="GeneID" id="101174651"/>
<dbReference type="KEGG" id="ola:101174651"/>
<dbReference type="eggNOG" id="KOG0157">
    <property type="taxonomic scope" value="Eukaryota"/>
</dbReference>
<dbReference type="GeneTree" id="ENSGT00840000129915"/>
<dbReference type="InParanoid" id="Q92087"/>
<dbReference type="OrthoDB" id="1470350at2759"/>
<dbReference type="Proteomes" id="UP000001038">
    <property type="component" value="Chromosome 3"/>
</dbReference>
<dbReference type="Proteomes" id="UP000265180">
    <property type="component" value="Chromosome 3"/>
</dbReference>
<dbReference type="Proteomes" id="UP000265200">
    <property type="component" value="Unplaced"/>
</dbReference>
<dbReference type="Bgee" id="ENSORLG00000002949">
    <property type="expression patterns" value="Expressed in ovary and 1 other cell type or tissue"/>
</dbReference>
<dbReference type="GO" id="GO:0005783">
    <property type="term" value="C:endoplasmic reticulum"/>
    <property type="evidence" value="ECO:0000318"/>
    <property type="project" value="GO_Central"/>
</dbReference>
<dbReference type="GO" id="GO:0016020">
    <property type="term" value="C:membrane"/>
    <property type="evidence" value="ECO:0007669"/>
    <property type="project" value="UniProtKB-SubCell"/>
</dbReference>
<dbReference type="GO" id="GO:0070330">
    <property type="term" value="F:aromatase activity"/>
    <property type="evidence" value="ECO:0000318"/>
    <property type="project" value="GO_Central"/>
</dbReference>
<dbReference type="GO" id="GO:0020037">
    <property type="term" value="F:heme binding"/>
    <property type="evidence" value="ECO:0007669"/>
    <property type="project" value="InterPro"/>
</dbReference>
<dbReference type="GO" id="GO:0005506">
    <property type="term" value="F:iron ion binding"/>
    <property type="evidence" value="ECO:0007669"/>
    <property type="project" value="InterPro"/>
</dbReference>
<dbReference type="GO" id="GO:0008585">
    <property type="term" value="P:female gonad development"/>
    <property type="evidence" value="ECO:0000318"/>
    <property type="project" value="GO_Central"/>
</dbReference>
<dbReference type="GO" id="GO:0006629">
    <property type="term" value="P:lipid metabolic process"/>
    <property type="evidence" value="ECO:0007669"/>
    <property type="project" value="UniProtKB-KW"/>
</dbReference>
<dbReference type="GO" id="GO:0032355">
    <property type="term" value="P:response to estradiol"/>
    <property type="evidence" value="ECO:0000318"/>
    <property type="project" value="GO_Central"/>
</dbReference>
<dbReference type="CDD" id="cd20616">
    <property type="entry name" value="CYP19A1"/>
    <property type="match status" value="1"/>
</dbReference>
<dbReference type="FunFam" id="1.10.630.10:FF:000032">
    <property type="entry name" value="Cytochrome P450 aromatase"/>
    <property type="match status" value="1"/>
</dbReference>
<dbReference type="Gene3D" id="1.10.630.10">
    <property type="entry name" value="Cytochrome P450"/>
    <property type="match status" value="1"/>
</dbReference>
<dbReference type="InterPro" id="IPR001128">
    <property type="entry name" value="Cyt_P450"/>
</dbReference>
<dbReference type="InterPro" id="IPR017972">
    <property type="entry name" value="Cyt_P450_CS"/>
</dbReference>
<dbReference type="InterPro" id="IPR002401">
    <property type="entry name" value="Cyt_P450_E_grp-I"/>
</dbReference>
<dbReference type="InterPro" id="IPR036396">
    <property type="entry name" value="Cyt_P450_sf"/>
</dbReference>
<dbReference type="InterPro" id="IPR050196">
    <property type="entry name" value="Cytochrome_P450_Monoox"/>
</dbReference>
<dbReference type="PANTHER" id="PTHR24291:SF204">
    <property type="entry name" value="AROMATASE"/>
    <property type="match status" value="1"/>
</dbReference>
<dbReference type="PANTHER" id="PTHR24291">
    <property type="entry name" value="CYTOCHROME P450 FAMILY 4"/>
    <property type="match status" value="1"/>
</dbReference>
<dbReference type="Pfam" id="PF00067">
    <property type="entry name" value="p450"/>
    <property type="match status" value="1"/>
</dbReference>
<dbReference type="PRINTS" id="PR00463">
    <property type="entry name" value="EP450I"/>
</dbReference>
<dbReference type="PRINTS" id="PR00385">
    <property type="entry name" value="P450"/>
</dbReference>
<dbReference type="SUPFAM" id="SSF48264">
    <property type="entry name" value="Cytochrome P450"/>
    <property type="match status" value="1"/>
</dbReference>
<dbReference type="PROSITE" id="PS00086">
    <property type="entry name" value="CYTOCHROME_P450"/>
    <property type="match status" value="1"/>
</dbReference>
<reference key="1">
    <citation type="journal article" date="1995" name="J. Biochem.">
        <title>Structure and promoter analysis of the cytochrome P-450 aromatase gene of the teleost fish, medaka (Oryzias latipes).</title>
        <authorList>
            <person name="Tanaka M."/>
            <person name="Fukada S."/>
            <person name="Matsuyama M."/>
            <person name="Nagahama Y."/>
        </authorList>
    </citation>
    <scope>NUCLEOTIDE SEQUENCE [MRNA]</scope>
    <source>
        <strain>Orange-red</strain>
        <tissue>Ovarian follicle</tissue>
    </source>
</reference>
<reference key="2">
    <citation type="journal article" date="1996" name="Mol. Reprod. Dev.">
        <title>Isolation, characterization, and expression of cDNAs encoding the medaka (Oryzias latipes) ovarian follicle cytochrome P-450 aromatase.</title>
        <authorList>
            <person name="Fukada S."/>
            <person name="Tanaka M."/>
            <person name="Matsuyama M."/>
            <person name="Kobayashi D."/>
            <person name="Nagahama Y."/>
        </authorList>
    </citation>
    <scope>NUCLEOTIDE SEQUENCE</scope>
    <source>
        <tissue>Ovarian follicle</tissue>
    </source>
</reference>
<reference key="3">
    <citation type="journal article" date="1999" name="Genome Res.">
        <title>Construction of a linkage map of the Medaka (Oryzias latipes) and mapping of the Da mutant locus defective in dorsoventral patterning.</title>
        <authorList>
            <person name="Ohtsuka M."/>
            <person name="Makino S."/>
            <person name="Yoda K."/>
            <person name="Wada H."/>
            <person name="Naruse K."/>
            <person name="Mitani H."/>
            <person name="Shima A."/>
            <person name="Ozato K."/>
            <person name="Kimura M."/>
            <person name="Inoko H."/>
        </authorList>
    </citation>
    <scope>NUCLEOTIDE SEQUENCE OF 418-496</scope>
    <source>
        <strain>Da</strain>
        <strain>HNI</strain>
    </source>
</reference>
<keyword id="KW-0349">Heme</keyword>
<keyword id="KW-0408">Iron</keyword>
<keyword id="KW-0443">Lipid metabolism</keyword>
<keyword id="KW-0472">Membrane</keyword>
<keyword id="KW-0479">Metal-binding</keyword>
<keyword id="KW-0503">Monooxygenase</keyword>
<keyword id="KW-0560">Oxidoreductase</keyword>
<keyword id="KW-1185">Reference proteome</keyword>
<gene>
    <name type="primary">cyp19a1</name>
    <name type="synonym">cyp19</name>
</gene>
<accession>Q92087</accession>
<accession>O13271</accession>
<accession>O13279</accession>
<accession>Q9PRF4</accession>
<evidence type="ECO:0000250" key="1"/>
<evidence type="ECO:0000250" key="2">
    <source>
        <dbReference type="UniProtKB" id="P11511"/>
    </source>
</evidence>
<evidence type="ECO:0000305" key="3"/>
<sequence>MDLIPACDRTMSSSCLVAELVSIAPNTTVGLPSGIPMATRSLILLVCLLLMVWSHSEKKTIPGPSFCLGLGPLMSYLRFIWTGIGTASNYYNNKYGDIVRVWINGEETLILSRASAVHHVLKNRKYTSRFGSKQGLSCIGMNEKGIIFNNNVALWKKIRTYFTKALTGPNLQQTVEVCVTSTQTHLDNLSSLSYVDVLGFLRCTVVDISNRLFLGVPVDEKELLQKIHKYFDTWQTVLIKPDIYFKFSWIHQRHKTAAQELQDAIESLVERKRKEMEQAEKLDNINFTAELIFAQGHGELSAENVRQCVLEMVIAAPDTLSISLFFMLLLLKQNPHVELQLLQEIDTIVGDSQLQNQDLQKLQVLESFINECLRFHPVVDFTMRRALFDDIIDGHRVQKGTNIILNTGRMHRTEFFHKANEFSLENFQKNTPRRYFQPFGSGPRACVGRHIAMVMMKSILVTLLSQYSVCPHEGLTLDCLPQTNNLSQQPVEHHQEADHLSMTFLPRQRGIWESPSPF</sequence>